<accession>B0TQ37</accession>
<reference key="1">
    <citation type="submission" date="2008-01" db="EMBL/GenBank/DDBJ databases">
        <title>Complete sequence of Shewanella halifaxensis HAW-EB4.</title>
        <authorList>
            <consortium name="US DOE Joint Genome Institute"/>
            <person name="Copeland A."/>
            <person name="Lucas S."/>
            <person name="Lapidus A."/>
            <person name="Glavina del Rio T."/>
            <person name="Dalin E."/>
            <person name="Tice H."/>
            <person name="Bruce D."/>
            <person name="Goodwin L."/>
            <person name="Pitluck S."/>
            <person name="Sims D."/>
            <person name="Brettin T."/>
            <person name="Detter J.C."/>
            <person name="Han C."/>
            <person name="Kuske C.R."/>
            <person name="Schmutz J."/>
            <person name="Larimer F."/>
            <person name="Land M."/>
            <person name="Hauser L."/>
            <person name="Kyrpides N."/>
            <person name="Kim E."/>
            <person name="Zhao J.-S."/>
            <person name="Richardson P."/>
        </authorList>
    </citation>
    <scope>NUCLEOTIDE SEQUENCE [LARGE SCALE GENOMIC DNA]</scope>
    <source>
        <strain>HAW-EB4</strain>
    </source>
</reference>
<protein>
    <recommendedName>
        <fullName evidence="1">Protein GrpE</fullName>
    </recommendedName>
    <alternativeName>
        <fullName evidence="1">HSP-70 cofactor</fullName>
    </alternativeName>
</protein>
<comment type="function">
    <text evidence="1">Participates actively in the response to hyperosmotic and heat shock by preventing the aggregation of stress-denatured proteins, in association with DnaK and GrpE. It is the nucleotide exchange factor for DnaK and may function as a thermosensor. Unfolded proteins bind initially to DnaJ; upon interaction with the DnaJ-bound protein, DnaK hydrolyzes its bound ATP, resulting in the formation of a stable complex. GrpE releases ADP from DnaK; ATP binding to DnaK triggers the release of the substrate protein, thus completing the reaction cycle. Several rounds of ATP-dependent interactions between DnaJ, DnaK and GrpE are required for fully efficient folding.</text>
</comment>
<comment type="subunit">
    <text evidence="1">Homodimer.</text>
</comment>
<comment type="subcellular location">
    <subcellularLocation>
        <location evidence="1">Cytoplasm</location>
    </subcellularLocation>
</comment>
<comment type="similarity">
    <text evidence="1">Belongs to the GrpE family.</text>
</comment>
<feature type="chain" id="PRO_1000137620" description="Protein GrpE">
    <location>
        <begin position="1"/>
        <end position="200"/>
    </location>
</feature>
<feature type="region of interest" description="Disordered" evidence="2">
    <location>
        <begin position="1"/>
        <end position="29"/>
    </location>
</feature>
<feature type="compositionally biased region" description="Polar residues" evidence="2">
    <location>
        <begin position="1"/>
        <end position="11"/>
    </location>
</feature>
<sequence>MSNQTNKAQDNQVEEIVEGELLNENGTEATGEASLMDELTQANFRVEELEKALQEAETKVESQKDSVIRAAAEVDNIRRRSAIDVEKAHKFALEKFINELLPVLDNMERALQGTDAEAEATKAIYEGVELTAKSFVSTVEKFGLTQVDPLGDTFNPELHQAIGMQPSADFPANTVMMVMQKGYTLNDRLLRPAMVMVSQG</sequence>
<evidence type="ECO:0000255" key="1">
    <source>
        <dbReference type="HAMAP-Rule" id="MF_01151"/>
    </source>
</evidence>
<evidence type="ECO:0000256" key="2">
    <source>
        <dbReference type="SAM" id="MobiDB-lite"/>
    </source>
</evidence>
<name>GRPE_SHEHH</name>
<organism>
    <name type="scientific">Shewanella halifaxensis (strain HAW-EB4)</name>
    <dbReference type="NCBI Taxonomy" id="458817"/>
    <lineage>
        <taxon>Bacteria</taxon>
        <taxon>Pseudomonadati</taxon>
        <taxon>Pseudomonadota</taxon>
        <taxon>Gammaproteobacteria</taxon>
        <taxon>Alteromonadales</taxon>
        <taxon>Shewanellaceae</taxon>
        <taxon>Shewanella</taxon>
    </lineage>
</organism>
<gene>
    <name evidence="1" type="primary">grpE</name>
    <name type="ordered locus">Shal_3081</name>
</gene>
<proteinExistence type="inferred from homology"/>
<dbReference type="EMBL" id="CP000931">
    <property type="protein sequence ID" value="ABZ77629.1"/>
    <property type="molecule type" value="Genomic_DNA"/>
</dbReference>
<dbReference type="RefSeq" id="WP_012278155.1">
    <property type="nucleotide sequence ID" value="NC_010334.1"/>
</dbReference>
<dbReference type="SMR" id="B0TQ37"/>
<dbReference type="STRING" id="458817.Shal_3081"/>
<dbReference type="KEGG" id="shl:Shal_3081"/>
<dbReference type="eggNOG" id="COG0576">
    <property type="taxonomic scope" value="Bacteria"/>
</dbReference>
<dbReference type="HOGENOM" id="CLU_057217_6_0_6"/>
<dbReference type="OrthoDB" id="9789811at2"/>
<dbReference type="Proteomes" id="UP000001317">
    <property type="component" value="Chromosome"/>
</dbReference>
<dbReference type="GO" id="GO:0005829">
    <property type="term" value="C:cytosol"/>
    <property type="evidence" value="ECO:0007669"/>
    <property type="project" value="TreeGrafter"/>
</dbReference>
<dbReference type="GO" id="GO:0000774">
    <property type="term" value="F:adenyl-nucleotide exchange factor activity"/>
    <property type="evidence" value="ECO:0007669"/>
    <property type="project" value="InterPro"/>
</dbReference>
<dbReference type="GO" id="GO:0042803">
    <property type="term" value="F:protein homodimerization activity"/>
    <property type="evidence" value="ECO:0007669"/>
    <property type="project" value="InterPro"/>
</dbReference>
<dbReference type="GO" id="GO:0051087">
    <property type="term" value="F:protein-folding chaperone binding"/>
    <property type="evidence" value="ECO:0007669"/>
    <property type="project" value="InterPro"/>
</dbReference>
<dbReference type="GO" id="GO:0051082">
    <property type="term" value="F:unfolded protein binding"/>
    <property type="evidence" value="ECO:0007669"/>
    <property type="project" value="TreeGrafter"/>
</dbReference>
<dbReference type="GO" id="GO:0006457">
    <property type="term" value="P:protein folding"/>
    <property type="evidence" value="ECO:0007669"/>
    <property type="project" value="InterPro"/>
</dbReference>
<dbReference type="CDD" id="cd00446">
    <property type="entry name" value="GrpE"/>
    <property type="match status" value="1"/>
</dbReference>
<dbReference type="FunFam" id="2.30.22.10:FF:000001">
    <property type="entry name" value="Protein GrpE"/>
    <property type="match status" value="1"/>
</dbReference>
<dbReference type="Gene3D" id="3.90.20.20">
    <property type="match status" value="1"/>
</dbReference>
<dbReference type="Gene3D" id="2.30.22.10">
    <property type="entry name" value="Head domain of nucleotide exchange factor GrpE"/>
    <property type="match status" value="1"/>
</dbReference>
<dbReference type="HAMAP" id="MF_01151">
    <property type="entry name" value="GrpE"/>
    <property type="match status" value="1"/>
</dbReference>
<dbReference type="InterPro" id="IPR000740">
    <property type="entry name" value="GrpE"/>
</dbReference>
<dbReference type="InterPro" id="IPR013805">
    <property type="entry name" value="GrpE_coiled_coil"/>
</dbReference>
<dbReference type="InterPro" id="IPR009012">
    <property type="entry name" value="GrpE_head"/>
</dbReference>
<dbReference type="NCBIfam" id="NF010737">
    <property type="entry name" value="PRK14139.1"/>
    <property type="match status" value="1"/>
</dbReference>
<dbReference type="NCBIfam" id="NF010738">
    <property type="entry name" value="PRK14140.1"/>
    <property type="match status" value="1"/>
</dbReference>
<dbReference type="NCBIfam" id="NF010748">
    <property type="entry name" value="PRK14150.1"/>
    <property type="match status" value="1"/>
</dbReference>
<dbReference type="PANTHER" id="PTHR21237">
    <property type="entry name" value="GRPE PROTEIN"/>
    <property type="match status" value="1"/>
</dbReference>
<dbReference type="PANTHER" id="PTHR21237:SF23">
    <property type="entry name" value="GRPE PROTEIN HOMOLOG, MITOCHONDRIAL"/>
    <property type="match status" value="1"/>
</dbReference>
<dbReference type="Pfam" id="PF01025">
    <property type="entry name" value="GrpE"/>
    <property type="match status" value="1"/>
</dbReference>
<dbReference type="PRINTS" id="PR00773">
    <property type="entry name" value="GRPEPROTEIN"/>
</dbReference>
<dbReference type="SUPFAM" id="SSF58014">
    <property type="entry name" value="Coiled-coil domain of nucleotide exchange factor GrpE"/>
    <property type="match status" value="1"/>
</dbReference>
<dbReference type="SUPFAM" id="SSF51064">
    <property type="entry name" value="Head domain of nucleotide exchange factor GrpE"/>
    <property type="match status" value="1"/>
</dbReference>
<dbReference type="PROSITE" id="PS01071">
    <property type="entry name" value="GRPE"/>
    <property type="match status" value="1"/>
</dbReference>
<keyword id="KW-0143">Chaperone</keyword>
<keyword id="KW-0963">Cytoplasm</keyword>
<keyword id="KW-0346">Stress response</keyword>